<name>HPR_SHOC1</name>
<organism>
    <name type="scientific">Shouchella clausii (strain KSM-K16)</name>
    <name type="common">Alkalihalobacillus clausii</name>
    <dbReference type="NCBI Taxonomy" id="66692"/>
    <lineage>
        <taxon>Bacteria</taxon>
        <taxon>Bacillati</taxon>
        <taxon>Bacillota</taxon>
        <taxon>Bacilli</taxon>
        <taxon>Bacillales</taxon>
        <taxon>Bacillaceae</taxon>
        <taxon>Shouchella</taxon>
    </lineage>
</organism>
<sequence>MEEMDLNHPLKESIVFSHKMALLSKALWKSVEKDWQAWIKPFHLNLNEHHILWIAYQLNGATISDIASHGVMHVSTAFNFSKKLEARGLLSFSKKKDDKRNTYICLTDSGRQLFLETMRAFNEHTYHVYQGAVPMKELYGKFPEFSELICIVRHIYGTEFIEQFDACLTDFQNDVEEKDGHLKLASANLFPLQPAK</sequence>
<protein>
    <recommendedName>
        <fullName evidence="1">HTH-type transcriptional regulator Hpr</fullName>
    </recommendedName>
    <alternativeName>
        <fullName evidence="1">Protease production regulatory protein Hpr</fullName>
    </alternativeName>
</protein>
<reference key="1">
    <citation type="submission" date="2003-10" db="EMBL/GenBank/DDBJ databases">
        <title>The complete genome sequence of the alkaliphilic Bacillus clausii KSM-K16.</title>
        <authorList>
            <person name="Takaki Y."/>
            <person name="Kageyama Y."/>
            <person name="Shimamura S."/>
            <person name="Suzuki H."/>
            <person name="Nishi S."/>
            <person name="Hatada Y."/>
            <person name="Kawai S."/>
            <person name="Ito S."/>
            <person name="Horikoshi K."/>
        </authorList>
    </citation>
    <scope>NUCLEOTIDE SEQUENCE [LARGE SCALE GENOMIC DNA]</scope>
    <source>
        <strain>KSM-K16</strain>
    </source>
</reference>
<dbReference type="EMBL" id="AP006627">
    <property type="protein sequence ID" value="BAD64064.1"/>
    <property type="status" value="ALT_INIT"/>
    <property type="molecule type" value="Genomic_DNA"/>
</dbReference>
<dbReference type="SMR" id="Q5WHU1"/>
<dbReference type="STRING" id="66692.ABC1529"/>
<dbReference type="KEGG" id="bcl:ABC1529"/>
<dbReference type="eggNOG" id="COG1846">
    <property type="taxonomic scope" value="Bacteria"/>
</dbReference>
<dbReference type="HOGENOM" id="CLU_115790_0_0_9"/>
<dbReference type="OrthoDB" id="2393954at2"/>
<dbReference type="Proteomes" id="UP000001168">
    <property type="component" value="Chromosome"/>
</dbReference>
<dbReference type="GO" id="GO:0003677">
    <property type="term" value="F:DNA binding"/>
    <property type="evidence" value="ECO:0007669"/>
    <property type="project" value="UniProtKB-UniRule"/>
</dbReference>
<dbReference type="GO" id="GO:0003700">
    <property type="term" value="F:DNA-binding transcription factor activity"/>
    <property type="evidence" value="ECO:0007669"/>
    <property type="project" value="UniProtKB-UniRule"/>
</dbReference>
<dbReference type="GO" id="GO:0045892">
    <property type="term" value="P:negative regulation of DNA-templated transcription"/>
    <property type="evidence" value="ECO:0007669"/>
    <property type="project" value="UniProtKB-UniRule"/>
</dbReference>
<dbReference type="GO" id="GO:0006950">
    <property type="term" value="P:response to stress"/>
    <property type="evidence" value="ECO:0007669"/>
    <property type="project" value="TreeGrafter"/>
</dbReference>
<dbReference type="GO" id="GO:0030435">
    <property type="term" value="P:sporulation resulting in formation of a cellular spore"/>
    <property type="evidence" value="ECO:0007669"/>
    <property type="project" value="UniProtKB-UniRule"/>
</dbReference>
<dbReference type="Gene3D" id="1.10.10.10">
    <property type="entry name" value="Winged helix-like DNA-binding domain superfamily/Winged helix DNA-binding domain"/>
    <property type="match status" value="1"/>
</dbReference>
<dbReference type="HAMAP" id="MF_01911">
    <property type="entry name" value="HTH_type_Hpr"/>
    <property type="match status" value="1"/>
</dbReference>
<dbReference type="InterPro" id="IPR000835">
    <property type="entry name" value="HTH_MarR-typ"/>
</dbReference>
<dbReference type="InterPro" id="IPR023488">
    <property type="entry name" value="HTH_tscrpt_reg_Hpr"/>
</dbReference>
<dbReference type="InterPro" id="IPR039422">
    <property type="entry name" value="MarR/SlyA-like"/>
</dbReference>
<dbReference type="InterPro" id="IPR023187">
    <property type="entry name" value="Tscrpt_reg_MarR-type_CS"/>
</dbReference>
<dbReference type="InterPro" id="IPR036388">
    <property type="entry name" value="WH-like_DNA-bd_sf"/>
</dbReference>
<dbReference type="InterPro" id="IPR036390">
    <property type="entry name" value="WH_DNA-bd_sf"/>
</dbReference>
<dbReference type="NCBIfam" id="NF010349">
    <property type="entry name" value="PRK13777.1"/>
    <property type="match status" value="1"/>
</dbReference>
<dbReference type="PANTHER" id="PTHR33164:SF58">
    <property type="entry name" value="DNA-BINDING TRANSCRIPTIONAL REPRESSOR SCOC"/>
    <property type="match status" value="1"/>
</dbReference>
<dbReference type="PANTHER" id="PTHR33164">
    <property type="entry name" value="TRANSCRIPTIONAL REGULATOR, MARR FAMILY"/>
    <property type="match status" value="1"/>
</dbReference>
<dbReference type="Pfam" id="PF01047">
    <property type="entry name" value="MarR"/>
    <property type="match status" value="1"/>
</dbReference>
<dbReference type="SMART" id="SM00347">
    <property type="entry name" value="HTH_MARR"/>
    <property type="match status" value="1"/>
</dbReference>
<dbReference type="SUPFAM" id="SSF46785">
    <property type="entry name" value="Winged helix' DNA-binding domain"/>
    <property type="match status" value="1"/>
</dbReference>
<dbReference type="PROSITE" id="PS01117">
    <property type="entry name" value="HTH_MARR_1"/>
    <property type="match status" value="1"/>
</dbReference>
<dbReference type="PROSITE" id="PS50995">
    <property type="entry name" value="HTH_MARR_2"/>
    <property type="match status" value="1"/>
</dbReference>
<comment type="function">
    <text evidence="1">Negative regulator of protease production and sporulation.</text>
</comment>
<comment type="subunit">
    <text evidence="1">Homodimer.</text>
</comment>
<comment type="sequence caution" evidence="2">
    <conflict type="erroneous initiation">
        <sequence resource="EMBL-CDS" id="BAD64064"/>
    </conflict>
</comment>
<feature type="chain" id="PRO_0000343622" description="HTH-type transcriptional regulator Hpr">
    <location>
        <begin position="1"/>
        <end position="196"/>
    </location>
</feature>
<feature type="domain" description="HTH marR-type" evidence="1">
    <location>
        <begin position="13"/>
        <end position="157"/>
    </location>
</feature>
<feature type="DNA-binding region" description="H-T-H motif" evidence="1">
    <location>
        <begin position="63"/>
        <end position="86"/>
    </location>
</feature>
<proteinExistence type="inferred from homology"/>
<accession>Q5WHU1</accession>
<gene>
    <name evidence="1" type="primary">hpr</name>
    <name type="ordered locus">ABC1529</name>
</gene>
<evidence type="ECO:0000255" key="1">
    <source>
        <dbReference type="HAMAP-Rule" id="MF_01911"/>
    </source>
</evidence>
<evidence type="ECO:0000305" key="2"/>
<keyword id="KW-0238">DNA-binding</keyword>
<keyword id="KW-1185">Reference proteome</keyword>
<keyword id="KW-0678">Repressor</keyword>
<keyword id="KW-0749">Sporulation</keyword>
<keyword id="KW-0804">Transcription</keyword>
<keyword id="KW-0805">Transcription regulation</keyword>